<feature type="chain" id="PRO_0000349358" description="Oxygen regulatory protein NreC">
    <location>
        <begin position="1"/>
        <end position="218"/>
    </location>
</feature>
<feature type="domain" description="Response regulatory" evidence="2">
    <location>
        <begin position="2"/>
        <end position="119"/>
    </location>
</feature>
<feature type="domain" description="HTH luxR-type" evidence="3">
    <location>
        <begin position="149"/>
        <end position="214"/>
    </location>
</feature>
<feature type="DNA-binding region" description="H-T-H motif" evidence="3">
    <location>
        <begin position="173"/>
        <end position="192"/>
    </location>
</feature>
<feature type="modified residue" description="4-aspartylphosphate" evidence="2">
    <location>
        <position position="53"/>
    </location>
</feature>
<protein>
    <recommendedName>
        <fullName>Oxygen regulatory protein NreC</fullName>
    </recommendedName>
    <alternativeName>
        <fullName>Nitrogen regulation protein C</fullName>
    </alternativeName>
</protein>
<organism>
    <name type="scientific">Staphylococcus epidermidis (strain ATCC 35984 / DSM 28319 / BCRC 17069 / CCUG 31568 / BM 3577 / RP62A)</name>
    <dbReference type="NCBI Taxonomy" id="176279"/>
    <lineage>
        <taxon>Bacteria</taxon>
        <taxon>Bacillati</taxon>
        <taxon>Bacillota</taxon>
        <taxon>Bacilli</taxon>
        <taxon>Bacillales</taxon>
        <taxon>Staphylococcaceae</taxon>
        <taxon>Staphylococcus</taxon>
    </lineage>
</organism>
<gene>
    <name type="primary">nreC</name>
    <name type="ordered locus">SERP1981</name>
</gene>
<comment type="function">
    <text evidence="1">Member of the two-component regulatory system NreB/NreC involved in the control of dissimilatory nitrate/nitrite reduction in response to oxygen. Phosphorylated NreC binds to a GC-rich palindromic sequence at the promoters of the nitrate (narGHJI) and nitrite (nir) reductase operons, as well as the putative nitrate transporter gene narT, and activates their expression (By similarity).</text>
</comment>
<comment type="subcellular location">
    <subcellularLocation>
        <location evidence="4">Cytoplasm</location>
    </subcellularLocation>
</comment>
<comment type="PTM">
    <text evidence="1">Phosphorylated by NreB.</text>
</comment>
<accession>Q5HLK6</accession>
<reference key="1">
    <citation type="journal article" date="2005" name="J. Bacteriol.">
        <title>Insights on evolution of virulence and resistance from the complete genome analysis of an early methicillin-resistant Staphylococcus aureus strain and a biofilm-producing methicillin-resistant Staphylococcus epidermidis strain.</title>
        <authorList>
            <person name="Gill S.R."/>
            <person name="Fouts D.E."/>
            <person name="Archer G.L."/>
            <person name="Mongodin E.F."/>
            <person name="DeBoy R.T."/>
            <person name="Ravel J."/>
            <person name="Paulsen I.T."/>
            <person name="Kolonay J.F."/>
            <person name="Brinkac L.M."/>
            <person name="Beanan M.J."/>
            <person name="Dodson R.J."/>
            <person name="Daugherty S.C."/>
            <person name="Madupu R."/>
            <person name="Angiuoli S.V."/>
            <person name="Durkin A.S."/>
            <person name="Haft D.H."/>
            <person name="Vamathevan J.J."/>
            <person name="Khouri H."/>
            <person name="Utterback T.R."/>
            <person name="Lee C."/>
            <person name="Dimitrov G."/>
            <person name="Jiang L."/>
            <person name="Qin H."/>
            <person name="Weidman J."/>
            <person name="Tran K."/>
            <person name="Kang K.H."/>
            <person name="Hance I.R."/>
            <person name="Nelson K.E."/>
            <person name="Fraser C.M."/>
        </authorList>
    </citation>
    <scope>NUCLEOTIDE SEQUENCE [LARGE SCALE GENOMIC DNA]</scope>
    <source>
        <strain>ATCC 35984 / DSM 28319 / BCRC 17069 / CCUG 31568 / BM 3577 / RP62A</strain>
    </source>
</reference>
<dbReference type="EMBL" id="CP000029">
    <property type="protein sequence ID" value="AAW52894.1"/>
    <property type="molecule type" value="Genomic_DNA"/>
</dbReference>
<dbReference type="RefSeq" id="WP_002438326.1">
    <property type="nucleotide sequence ID" value="NC_002976.3"/>
</dbReference>
<dbReference type="SMR" id="Q5HLK6"/>
<dbReference type="STRING" id="176279.SERP1981"/>
<dbReference type="GeneID" id="50017937"/>
<dbReference type="KEGG" id="ser:SERP1981"/>
<dbReference type="eggNOG" id="COG2197">
    <property type="taxonomic scope" value="Bacteria"/>
</dbReference>
<dbReference type="HOGENOM" id="CLU_000445_90_1_9"/>
<dbReference type="Proteomes" id="UP000000531">
    <property type="component" value="Chromosome"/>
</dbReference>
<dbReference type="GO" id="GO:0005737">
    <property type="term" value="C:cytoplasm"/>
    <property type="evidence" value="ECO:0007669"/>
    <property type="project" value="UniProtKB-SubCell"/>
</dbReference>
<dbReference type="GO" id="GO:0003677">
    <property type="term" value="F:DNA binding"/>
    <property type="evidence" value="ECO:0007669"/>
    <property type="project" value="UniProtKB-KW"/>
</dbReference>
<dbReference type="GO" id="GO:0000160">
    <property type="term" value="P:phosphorelay signal transduction system"/>
    <property type="evidence" value="ECO:0007669"/>
    <property type="project" value="UniProtKB-KW"/>
</dbReference>
<dbReference type="GO" id="GO:0006355">
    <property type="term" value="P:regulation of DNA-templated transcription"/>
    <property type="evidence" value="ECO:0007669"/>
    <property type="project" value="InterPro"/>
</dbReference>
<dbReference type="CDD" id="cd06170">
    <property type="entry name" value="LuxR_C_like"/>
    <property type="match status" value="1"/>
</dbReference>
<dbReference type="CDD" id="cd17535">
    <property type="entry name" value="REC_NarL-like"/>
    <property type="match status" value="1"/>
</dbReference>
<dbReference type="Gene3D" id="3.40.50.2300">
    <property type="match status" value="1"/>
</dbReference>
<dbReference type="InterPro" id="IPR011006">
    <property type="entry name" value="CheY-like_superfamily"/>
</dbReference>
<dbReference type="InterPro" id="IPR016032">
    <property type="entry name" value="Sig_transdc_resp-reg_C-effctor"/>
</dbReference>
<dbReference type="InterPro" id="IPR001789">
    <property type="entry name" value="Sig_transdc_resp-reg_receiver"/>
</dbReference>
<dbReference type="InterPro" id="IPR000792">
    <property type="entry name" value="Tscrpt_reg_LuxR_C"/>
</dbReference>
<dbReference type="InterPro" id="IPR039420">
    <property type="entry name" value="WalR-like"/>
</dbReference>
<dbReference type="PANTHER" id="PTHR43214:SF37">
    <property type="entry name" value="TRANSCRIPTIONAL REGULATORY PROTEIN YDFI"/>
    <property type="match status" value="1"/>
</dbReference>
<dbReference type="PANTHER" id="PTHR43214">
    <property type="entry name" value="TWO-COMPONENT RESPONSE REGULATOR"/>
    <property type="match status" value="1"/>
</dbReference>
<dbReference type="Pfam" id="PF00196">
    <property type="entry name" value="GerE"/>
    <property type="match status" value="1"/>
</dbReference>
<dbReference type="Pfam" id="PF00072">
    <property type="entry name" value="Response_reg"/>
    <property type="match status" value="1"/>
</dbReference>
<dbReference type="PRINTS" id="PR00038">
    <property type="entry name" value="HTHLUXR"/>
</dbReference>
<dbReference type="SMART" id="SM00421">
    <property type="entry name" value="HTH_LUXR"/>
    <property type="match status" value="1"/>
</dbReference>
<dbReference type="SMART" id="SM00448">
    <property type="entry name" value="REC"/>
    <property type="match status" value="1"/>
</dbReference>
<dbReference type="SUPFAM" id="SSF46894">
    <property type="entry name" value="C-terminal effector domain of the bipartite response regulators"/>
    <property type="match status" value="1"/>
</dbReference>
<dbReference type="SUPFAM" id="SSF52172">
    <property type="entry name" value="CheY-like"/>
    <property type="match status" value="1"/>
</dbReference>
<dbReference type="PROSITE" id="PS00622">
    <property type="entry name" value="HTH_LUXR_1"/>
    <property type="match status" value="1"/>
</dbReference>
<dbReference type="PROSITE" id="PS50043">
    <property type="entry name" value="HTH_LUXR_2"/>
    <property type="match status" value="1"/>
</dbReference>
<dbReference type="PROSITE" id="PS50110">
    <property type="entry name" value="RESPONSE_REGULATORY"/>
    <property type="match status" value="1"/>
</dbReference>
<sequence length="218" mass="24471">MKIVIADDHAVVRTGFSMILNYQEDMEVVATAADGVEAYQKVLEHRPDVLILDLSMPPGESGLIATSKISESFPDTKILILTMFDDEEYLFHVLKSGAKGYILKNSPDEQLILAVRTVYQGETYVDMKLTTSLVNEFVNQSQTDEVSSSSDPFKILSKRELEILPLIAKGYGNKDIAEKLFVSVKTVEAHKTHIMTKLNLKSKPELVEYALKKKLLEF</sequence>
<evidence type="ECO:0000250" key="1"/>
<evidence type="ECO:0000255" key="2">
    <source>
        <dbReference type="PROSITE-ProRule" id="PRU00169"/>
    </source>
</evidence>
<evidence type="ECO:0000255" key="3">
    <source>
        <dbReference type="PROSITE-ProRule" id="PRU00411"/>
    </source>
</evidence>
<evidence type="ECO:0000305" key="4"/>
<name>NREC_STAEQ</name>
<keyword id="KW-0010">Activator</keyword>
<keyword id="KW-0963">Cytoplasm</keyword>
<keyword id="KW-0238">DNA-binding</keyword>
<keyword id="KW-0597">Phosphoprotein</keyword>
<keyword id="KW-1185">Reference proteome</keyword>
<keyword id="KW-0804">Transcription</keyword>
<keyword id="KW-0805">Transcription regulation</keyword>
<keyword id="KW-0902">Two-component regulatory system</keyword>
<proteinExistence type="inferred from homology"/>